<feature type="chain" id="PRO_0000402797" description="2-oxoglutarate carboxylase large subunit">
    <location>
        <begin position="1"/>
        <end position="652"/>
    </location>
</feature>
<feature type="domain" description="Pyruvate carboxyltransferase" evidence="4">
    <location>
        <begin position="26"/>
        <end position="288"/>
    </location>
</feature>
<feature type="domain" description="Biotinyl-binding" evidence="3">
    <location>
        <begin position="563"/>
        <end position="643"/>
    </location>
</feature>
<feature type="binding site" evidence="1">
    <location>
        <begin position="34"/>
        <end position="38"/>
    </location>
    <ligand>
        <name>substrate</name>
    </ligand>
</feature>
<feature type="binding site" evidence="1">
    <location>
        <position position="35"/>
    </location>
    <ligand>
        <name>a divalent metal cation</name>
        <dbReference type="ChEBI" id="CHEBI:60240"/>
    </ligand>
</feature>
<feature type="binding site" evidence="1">
    <location>
        <position position="105"/>
    </location>
    <ligand>
        <name>substrate</name>
    </ligand>
</feature>
<feature type="binding site" description="via carbamate group" evidence="1">
    <location>
        <position position="196"/>
    </location>
    <ligand>
        <name>a divalent metal cation</name>
        <dbReference type="ChEBI" id="CHEBI:60240"/>
    </ligand>
</feature>
<feature type="binding site" evidence="1">
    <location>
        <position position="227"/>
    </location>
    <ligand>
        <name>a divalent metal cation</name>
        <dbReference type="ChEBI" id="CHEBI:60240"/>
    </ligand>
</feature>
<feature type="binding site" evidence="1">
    <location>
        <position position="229"/>
    </location>
    <ligand>
        <name>a divalent metal cation</name>
        <dbReference type="ChEBI" id="CHEBI:60240"/>
    </ligand>
</feature>
<feature type="binding site" evidence="1">
    <location>
        <position position="362"/>
    </location>
    <ligand>
        <name>substrate</name>
    </ligand>
</feature>
<feature type="modified residue" description="N6-carboxylysine" evidence="1">
    <location>
        <position position="196"/>
    </location>
</feature>
<feature type="modified residue" description="N6-biotinyllysine" evidence="1 3">
    <location>
        <position position="609"/>
    </location>
</feature>
<name>2OCL_HYDTT</name>
<comment type="catalytic activity">
    <reaction evidence="6">
        <text>hydrogencarbonate + 2-oxoglutarate + ATP = (S)-oxalosuccinate + ADP + phosphate + H(+)</text>
        <dbReference type="Rhea" id="RHEA:20425"/>
        <dbReference type="ChEBI" id="CHEBI:15378"/>
        <dbReference type="ChEBI" id="CHEBI:16810"/>
        <dbReference type="ChEBI" id="CHEBI:17544"/>
        <dbReference type="ChEBI" id="CHEBI:30616"/>
        <dbReference type="ChEBI" id="CHEBI:43474"/>
        <dbReference type="ChEBI" id="CHEBI:153066"/>
        <dbReference type="ChEBI" id="CHEBI:456216"/>
        <dbReference type="EC" id="6.4.1.7"/>
    </reaction>
</comment>
<comment type="cofactor">
    <cofactor evidence="2">
        <name>Mg(2+)</name>
        <dbReference type="ChEBI" id="CHEBI:18420"/>
    </cofactor>
    <cofactor evidence="2">
        <name>Mn(2+)</name>
        <dbReference type="ChEBI" id="CHEBI:29035"/>
    </cofactor>
    <cofactor evidence="2">
        <name>Co(2+)</name>
        <dbReference type="ChEBI" id="CHEBI:48828"/>
    </cofactor>
</comment>
<comment type="subunit">
    <text evidence="5 6">Heterohexadecamer of 8 large subunits and 8 small subunits.</text>
</comment>
<comment type="PTM">
    <text evidence="5">Biotinylated.</text>
</comment>
<keyword id="KW-0067">ATP-binding</keyword>
<keyword id="KW-0092">Biotin</keyword>
<keyword id="KW-0903">Direct protein sequencing</keyword>
<keyword id="KW-0436">Ligase</keyword>
<keyword id="KW-0460">Magnesium</keyword>
<keyword id="KW-0479">Metal-binding</keyword>
<keyword id="KW-0547">Nucleotide-binding</keyword>
<keyword id="KW-1185">Reference proteome</keyword>
<gene>
    <name evidence="10" type="primary">cfiA</name>
    <name type="ordered locus">HTH_1392</name>
    <name type="ordered locus">Hydth_1382</name>
</gene>
<dbReference type="EC" id="6.4.1.7"/>
<dbReference type="EMBL" id="AB246889">
    <property type="protein sequence ID" value="BAF34932.1"/>
    <property type="molecule type" value="Genomic_DNA"/>
</dbReference>
<dbReference type="EMBL" id="AP011112">
    <property type="protein sequence ID" value="BAI69843.1"/>
    <property type="molecule type" value="Genomic_DNA"/>
</dbReference>
<dbReference type="EMBL" id="CP002221">
    <property type="protein sequence ID" value="ADO45767.1"/>
    <property type="molecule type" value="Genomic_DNA"/>
</dbReference>
<dbReference type="RefSeq" id="WP_012964023.1">
    <property type="nucleotide sequence ID" value="NC_013799.1"/>
</dbReference>
<dbReference type="SMR" id="D3DJ41"/>
<dbReference type="STRING" id="608538.HTH_1392"/>
<dbReference type="KEGG" id="hte:Hydth_1382"/>
<dbReference type="KEGG" id="hth:HTH_1392"/>
<dbReference type="PATRIC" id="fig|608538.5.peg.1413"/>
<dbReference type="eggNOG" id="COG0511">
    <property type="taxonomic scope" value="Bacteria"/>
</dbReference>
<dbReference type="eggNOG" id="COG5016">
    <property type="taxonomic scope" value="Bacteria"/>
</dbReference>
<dbReference type="HOGENOM" id="CLU_000395_4_2_0"/>
<dbReference type="OrthoDB" id="9807469at2"/>
<dbReference type="Proteomes" id="UP000002574">
    <property type="component" value="Chromosome"/>
</dbReference>
<dbReference type="GO" id="GO:0005737">
    <property type="term" value="C:cytoplasm"/>
    <property type="evidence" value="ECO:0007669"/>
    <property type="project" value="TreeGrafter"/>
</dbReference>
<dbReference type="GO" id="GO:0034029">
    <property type="term" value="F:2-oxoglutarate carboxylase activity"/>
    <property type="evidence" value="ECO:0007669"/>
    <property type="project" value="UniProtKB-EC"/>
</dbReference>
<dbReference type="GO" id="GO:0005524">
    <property type="term" value="F:ATP binding"/>
    <property type="evidence" value="ECO:0007669"/>
    <property type="project" value="UniProtKB-KW"/>
</dbReference>
<dbReference type="GO" id="GO:0046872">
    <property type="term" value="F:metal ion binding"/>
    <property type="evidence" value="ECO:0007669"/>
    <property type="project" value="UniProtKB-KW"/>
</dbReference>
<dbReference type="GO" id="GO:0004736">
    <property type="term" value="F:pyruvate carboxylase activity"/>
    <property type="evidence" value="ECO:0007669"/>
    <property type="project" value="TreeGrafter"/>
</dbReference>
<dbReference type="GO" id="GO:0006094">
    <property type="term" value="P:gluconeogenesis"/>
    <property type="evidence" value="ECO:0007669"/>
    <property type="project" value="TreeGrafter"/>
</dbReference>
<dbReference type="CDD" id="cd06850">
    <property type="entry name" value="biotinyl_domain"/>
    <property type="match status" value="1"/>
</dbReference>
<dbReference type="CDD" id="cd07937">
    <property type="entry name" value="DRE_TIM_PC_TC_5S"/>
    <property type="match status" value="1"/>
</dbReference>
<dbReference type="FunFam" id="2.40.50.100:FF:000003">
    <property type="entry name" value="Acetyl-CoA carboxylase biotin carboxyl carrier protein"/>
    <property type="match status" value="1"/>
</dbReference>
<dbReference type="Gene3D" id="2.40.50.100">
    <property type="match status" value="1"/>
</dbReference>
<dbReference type="Gene3D" id="3.20.20.70">
    <property type="entry name" value="Aldolase class I"/>
    <property type="match status" value="1"/>
</dbReference>
<dbReference type="InterPro" id="IPR013785">
    <property type="entry name" value="Aldolase_TIM"/>
</dbReference>
<dbReference type="InterPro" id="IPR001882">
    <property type="entry name" value="Biotin_BS"/>
</dbReference>
<dbReference type="InterPro" id="IPR000089">
    <property type="entry name" value="Biotin_lipoyl"/>
</dbReference>
<dbReference type="InterPro" id="IPR003379">
    <property type="entry name" value="Carboxylase_cons_dom"/>
</dbReference>
<dbReference type="InterPro" id="IPR055268">
    <property type="entry name" value="PCB-like"/>
</dbReference>
<dbReference type="InterPro" id="IPR000891">
    <property type="entry name" value="PYR_CT"/>
</dbReference>
<dbReference type="InterPro" id="IPR011053">
    <property type="entry name" value="Single_hybrid_motif"/>
</dbReference>
<dbReference type="NCBIfam" id="NF006761">
    <property type="entry name" value="PRK09282.1"/>
    <property type="match status" value="1"/>
</dbReference>
<dbReference type="PANTHER" id="PTHR43778">
    <property type="entry name" value="PYRUVATE CARBOXYLASE"/>
    <property type="match status" value="1"/>
</dbReference>
<dbReference type="PANTHER" id="PTHR43778:SF2">
    <property type="entry name" value="PYRUVATE CARBOXYLASE, MITOCHONDRIAL"/>
    <property type="match status" value="1"/>
</dbReference>
<dbReference type="Pfam" id="PF00364">
    <property type="entry name" value="Biotin_lipoyl"/>
    <property type="match status" value="1"/>
</dbReference>
<dbReference type="Pfam" id="PF00682">
    <property type="entry name" value="HMGL-like"/>
    <property type="match status" value="1"/>
</dbReference>
<dbReference type="Pfam" id="PF02436">
    <property type="entry name" value="PYC_OADA"/>
    <property type="match status" value="1"/>
</dbReference>
<dbReference type="SUPFAM" id="SSF51569">
    <property type="entry name" value="Aldolase"/>
    <property type="match status" value="1"/>
</dbReference>
<dbReference type="SUPFAM" id="SSF89000">
    <property type="entry name" value="post-HMGL domain-like"/>
    <property type="match status" value="1"/>
</dbReference>
<dbReference type="SUPFAM" id="SSF51230">
    <property type="entry name" value="Single hybrid motif"/>
    <property type="match status" value="1"/>
</dbReference>
<dbReference type="PROSITE" id="PS00188">
    <property type="entry name" value="BIOTIN"/>
    <property type="match status" value="1"/>
</dbReference>
<dbReference type="PROSITE" id="PS50968">
    <property type="entry name" value="BIOTINYL_LIPOYL"/>
    <property type="match status" value="1"/>
</dbReference>
<dbReference type="PROSITE" id="PS50991">
    <property type="entry name" value="PYR_CT"/>
    <property type="match status" value="1"/>
</dbReference>
<organism>
    <name type="scientific">Hydrogenobacter thermophilus (strain DSM 6534 / IAM 12695 / TK-6)</name>
    <dbReference type="NCBI Taxonomy" id="608538"/>
    <lineage>
        <taxon>Bacteria</taxon>
        <taxon>Pseudomonadati</taxon>
        <taxon>Aquificota</taxon>
        <taxon>Aquificia</taxon>
        <taxon>Aquificales</taxon>
        <taxon>Aquificaceae</taxon>
        <taxon>Hydrogenobacter</taxon>
    </lineage>
</organism>
<protein>
    <recommendedName>
        <fullName evidence="10">2-oxoglutarate carboxylase large subunit</fullName>
        <ecNumber>6.4.1.7</ecNumber>
    </recommendedName>
    <alternativeName>
        <fullName evidence="7">2-oxoglutarate carboxylase alpha subunit</fullName>
    </alternativeName>
</protein>
<proteinExistence type="evidence at protein level"/>
<evidence type="ECO:0000250" key="1">
    <source>
        <dbReference type="UniProtKB" id="P11498"/>
    </source>
</evidence>
<evidence type="ECO:0000250" key="2">
    <source>
        <dbReference type="UniProtKB" id="Q58628"/>
    </source>
</evidence>
<evidence type="ECO:0000255" key="3">
    <source>
        <dbReference type="PROSITE-ProRule" id="PRU01066"/>
    </source>
</evidence>
<evidence type="ECO:0000255" key="4">
    <source>
        <dbReference type="PROSITE-ProRule" id="PRU01151"/>
    </source>
</evidence>
<evidence type="ECO:0000269" key="5">
    <source>
    </source>
</evidence>
<evidence type="ECO:0000269" key="6">
    <source>
    </source>
</evidence>
<evidence type="ECO:0000303" key="7">
    <source>
    </source>
</evidence>
<evidence type="ECO:0000305" key="8"/>
<evidence type="ECO:0000312" key="9">
    <source>
        <dbReference type="EMBL" id="BAF34932.1"/>
    </source>
</evidence>
<evidence type="ECO:0000312" key="10">
    <source>
        <dbReference type="EMBL" id="BAI69843.1"/>
    </source>
</evidence>
<sequence>MQAVEIMEEIREKFKEFEKGGFRKKILITDLTPRDGQQCKLATRVRTDDLLPLCEAMDKVGFYAVEVWGGATYDVCLRYLKEDPWERLRRIKEVMPNTKLQMLFRGQNIVGYRPKSDKLVYKFVERAIKNGITVFRVFDALNDNRNIKTAVKAIKELGGEAHAEISYTRSPIHTYQKWIEYALEIAEMGADWLSFKDATGIIMPFETYAIIKGIKEATGGKLPVLLHNHDMSGTAIVNHMMAVLAGVDMLDTVLSPLAFGSSHPATESVVAMLEGTPFDTGIDMKKLDELAEIVKQIRKKYKKYETEYAGVNAKVLIHKIPGGMISNMVAQLIEANALDKIEEALEEVPNVERDLGHPPLLTPSSQIVGVQAVLNVISGERYKVITKEVRDYVEGKYGKPPGPISKELAEKILGPGKEPDFSIRAADLADPNDWDKAYEETKAILGREPTDEEVLLYALFPMQAKDFFVAREKGELHPEPVDELVETTEVKAGVVPGAAPVEFEIVYHGEKFKVKVEGVSAHQEPGKPRKYYIRVDGRLEEVQITPHVEAIPKGGPTPTAVQAEEKGIPKATQPGDATAPMPGRVVRVLVKEGDKVKEGQTVAIVEAMKMENEIHAPISGVVEKVFVKPGDNVTPDDALLRIKHIEEEVSYG</sequence>
<reference evidence="8 9" key="1">
    <citation type="journal article" date="2006" name="Mol. Microbiol.">
        <title>A novel oxalosuccinate-forming enzyme involved in the reductive carboxylation of 2-oxoglutarate in Hydrogenobacter thermophilus TK-6.</title>
        <authorList>
            <person name="Aoshima M."/>
            <person name="Igarashi Y."/>
        </authorList>
    </citation>
    <scope>NUCLEOTIDE SEQUENCE [GENOMIC DNA]</scope>
    <scope>CATALYTIC ACTIVITY</scope>
    <scope>SUBUNIT</scope>
</reference>
<reference evidence="10" key="2">
    <citation type="journal article" date="2010" name="J. Bacteriol.">
        <title>Complete genome sequence of the thermophilic, obligately chemolithoautotrophic hydrogen-oxidizing bacterium Hydrogenobacter thermophilus TK-6.</title>
        <authorList>
            <person name="Arai H."/>
            <person name="Kanbe H."/>
            <person name="Ishii M."/>
            <person name="Igarashi Y."/>
        </authorList>
    </citation>
    <scope>NUCLEOTIDE SEQUENCE [LARGE SCALE GENOMIC DNA]</scope>
    <source>
        <strain>DSM 6534 / IAM 12695 / TK-6</strain>
    </source>
</reference>
<reference key="3">
    <citation type="journal article" date="2011" name="Stand. Genomic Sci.">
        <title>Complete genome sequence of Hydrogenobacter thermophilus type strain (TK-6).</title>
        <authorList>
            <consortium name="US DOE Joint Genome Institute (JGI-PGF)"/>
            <person name="Zeytun A."/>
            <person name="Sikorski J."/>
            <person name="Nolan M."/>
            <person name="Lapidus A."/>
            <person name="Lucas S."/>
            <person name="Han J."/>
            <person name="Tice H."/>
            <person name="Cheng J.F."/>
            <person name="Tapia R."/>
            <person name="Goodwin L."/>
            <person name="Pitluck S."/>
            <person name="Liolios K."/>
            <person name="Ivanova N."/>
            <person name="Mavromatis K."/>
            <person name="Mikhailova N."/>
            <person name="Ovchinnikova G."/>
            <person name="Pati A."/>
            <person name="Chen A."/>
            <person name="Palaniappan K."/>
            <person name="Ngatchou-Djao O.D."/>
            <person name="Land M."/>
            <person name="Hauser L."/>
            <person name="Jeffries C.D."/>
            <person name="Han C."/>
            <person name="Detter J.C."/>
            <person name="Ubler S."/>
            <person name="Rohde M."/>
            <person name="Tindall B.J."/>
            <person name="Goker M."/>
            <person name="Wirth R."/>
            <person name="Woyke T."/>
            <person name="Bristow J."/>
            <person name="Eisen J.A."/>
            <person name="Markowitz V."/>
            <person name="Hugenholtz P."/>
            <person name="Klenk H.P."/>
            <person name="Kyrpides N.C."/>
        </authorList>
    </citation>
    <scope>NUCLEOTIDE SEQUENCE [LARGE SCALE GENOMIC DNA]</scope>
    <source>
        <strain>DSM 6534 / IAM 12695 / TK-6</strain>
    </source>
</reference>
<reference evidence="8" key="4">
    <citation type="journal article" date="2004" name="Mol. Microbiol.">
        <title>A novel biotin protein required for reductive carboxylation of 2-oxoglutarate by isocitrate dehydrogenase in Hydrogenobacter thermophilus TK-6.</title>
        <authorList>
            <person name="Aoshima M."/>
            <person name="Ishii M."/>
            <person name="Igarashi Y."/>
        </authorList>
    </citation>
    <scope>PROTEIN SEQUENCE OF 1-30</scope>
    <scope>SUBUNIT</scope>
    <scope>BIOTINYLATION</scope>
</reference>
<accession>D3DJ41</accession>
<accession>Q05KD8</accession>